<dbReference type="EMBL" id="U00096">
    <property type="protein sequence ID" value="AAC74429.1"/>
    <property type="molecule type" value="Genomic_DNA"/>
</dbReference>
<dbReference type="EMBL" id="AP009048">
    <property type="protein sequence ID" value="BAA14947.1"/>
    <property type="molecule type" value="Genomic_DNA"/>
</dbReference>
<dbReference type="EMBL" id="L23927">
    <property type="protein sequence ID" value="AAA16181.1"/>
    <property type="molecule type" value="Unassigned_DNA"/>
</dbReference>
<dbReference type="PIR" id="F64884">
    <property type="entry name" value="F64884"/>
</dbReference>
<dbReference type="RefSeq" id="NP_415863.1">
    <property type="nucleotide sequence ID" value="NC_000913.3"/>
</dbReference>
<dbReference type="RefSeq" id="WP_000276809.1">
    <property type="nucleotide sequence ID" value="NZ_JACEFS010000049.1"/>
</dbReference>
<dbReference type="BioGRID" id="4261948">
    <property type="interactions" value="18"/>
</dbReference>
<dbReference type="DIP" id="DIP-11619N"/>
<dbReference type="FunCoup" id="P33230">
    <property type="interactions" value="110"/>
</dbReference>
<dbReference type="IntAct" id="P33230">
    <property type="interactions" value="5"/>
</dbReference>
<dbReference type="STRING" id="511145.b1347"/>
<dbReference type="PaxDb" id="511145-b1347"/>
<dbReference type="EnsemblBacteria" id="AAC74429">
    <property type="protein sequence ID" value="AAC74429"/>
    <property type="gene ID" value="b1347"/>
</dbReference>
<dbReference type="GeneID" id="947504"/>
<dbReference type="KEGG" id="ecj:JW1341"/>
<dbReference type="KEGG" id="eco:b1347"/>
<dbReference type="KEGG" id="ecoc:C3026_07890"/>
<dbReference type="PATRIC" id="fig|1411691.4.peg.929"/>
<dbReference type="EchoBASE" id="EB1846"/>
<dbReference type="eggNOG" id="ENOG503488V">
    <property type="taxonomic scope" value="Bacteria"/>
</dbReference>
<dbReference type="HOGENOM" id="CLU_185969_0_0_6"/>
<dbReference type="InParanoid" id="P33230"/>
<dbReference type="OMA" id="CKENPPA"/>
<dbReference type="OrthoDB" id="6571392at2"/>
<dbReference type="BioCyc" id="EcoCyc:EG11901-MONOMER"/>
<dbReference type="PRO" id="PR:P33230"/>
<dbReference type="Proteomes" id="UP000000625">
    <property type="component" value="Chromosome"/>
</dbReference>
<dbReference type="GO" id="GO:0006259">
    <property type="term" value="P:DNA metabolic process"/>
    <property type="evidence" value="ECO:0000315"/>
    <property type="project" value="EcoCyc"/>
</dbReference>
<dbReference type="GO" id="GO:0046677">
    <property type="term" value="P:response to antibiotic"/>
    <property type="evidence" value="ECO:0007669"/>
    <property type="project" value="UniProtKB-KW"/>
</dbReference>
<dbReference type="InterPro" id="IPR009572">
    <property type="entry name" value="DUF1187"/>
</dbReference>
<dbReference type="NCBIfam" id="NF007283">
    <property type="entry name" value="PRK09750.1"/>
    <property type="match status" value="1"/>
</dbReference>
<dbReference type="Pfam" id="PF06688">
    <property type="entry name" value="DUF1187"/>
    <property type="match status" value="1"/>
</dbReference>
<feature type="chain" id="PRO_0000168901" description="Double-strand break reduction protein">
    <location>
        <begin position="1"/>
        <end position="69"/>
    </location>
</feature>
<feature type="mutagenesis site" description="No protein should be translated, DNA region still acts as an antitoxin to RalR." evidence="2">
    <original>M</original>
    <variation>T</variation>
    <location>
        <position position="1"/>
    </location>
</feature>
<feature type="mutagenesis site" description="No protein should be translated, DNA region still acts as an antitoxin to RalR." evidence="2">
    <location>
        <begin position="9"/>
        <end position="69"/>
    </location>
</feature>
<accession>P33230</accession>
<accession>P77683</accession>
<keyword id="KW-0046">Antibiotic resistance</keyword>
<keyword id="KW-1185">Reference proteome</keyword>
<sequence length="69" mass="7863">MYKITATIEKEGGTPTNWTRYSKSKLTKSECEKMLSGKKEAGVSREQKVKLINFNCEKLQSSRIALYSN</sequence>
<name>RCBA_ECOLI</name>
<organism>
    <name type="scientific">Escherichia coli (strain K12)</name>
    <dbReference type="NCBI Taxonomy" id="83333"/>
    <lineage>
        <taxon>Bacteria</taxon>
        <taxon>Pseudomonadati</taxon>
        <taxon>Pseudomonadota</taxon>
        <taxon>Gammaproteobacteria</taxon>
        <taxon>Enterobacterales</taxon>
        <taxon>Enterobacteriaceae</taxon>
        <taxon>Escherichia</taxon>
    </lineage>
</organism>
<protein>
    <recommendedName>
        <fullName evidence="3">Double-strand break reduction protein</fullName>
    </recommendedName>
</protein>
<proteinExistence type="evidence at protein level"/>
<comment type="function">
    <text evidence="1 2">Helps to maintain the integrity of the chromosome by lowering the steady-state level of double strand breaks (PubMed:22343303). This region of DNA acts as an antitoxin to toxin RalR, a DNase, but it seems to be sRNA RalA that has the antitoxin activity and not this putative protein. Therefore the identity of this as a protein-coding gene has been cast into doubt (PubMed:24748661).</text>
</comment>
<comment type="interaction">
    <interactant intactId="EBI-562744">
        <id>P33230</id>
    </interactant>
    <interactant intactId="EBI-562588">
        <id>P75728</id>
        <label>ubiF</label>
    </interactant>
    <organismsDiffer>false</organismsDiffer>
    <experiments>2</experiments>
</comment>
<comment type="disruption phenotype">
    <text evidence="1 2">Mutants show increased numbers of double-strand breaks (PubMed:22343303). The single ralR and double ralR-ralA mutant have increased sensitivity to the antibiotic fosfomycin.</text>
</comment>
<gene>
    <name evidence="3" type="primary">rcbA</name>
    <name type="synonym">ydaC</name>
    <name type="ordered locus">b1347</name>
    <name type="ordered locus">JW1341</name>
</gene>
<reference key="1">
    <citation type="journal article" date="1996" name="DNA Res.">
        <title>A 570-kb DNA sequence of the Escherichia coli K-12 genome corresponding to the 28.0-40.1 min region on the linkage map.</title>
        <authorList>
            <person name="Aiba H."/>
            <person name="Baba T."/>
            <person name="Fujita K."/>
            <person name="Hayashi K."/>
            <person name="Inada T."/>
            <person name="Isono K."/>
            <person name="Itoh T."/>
            <person name="Kasai H."/>
            <person name="Kashimoto K."/>
            <person name="Kimura S."/>
            <person name="Kitakawa M."/>
            <person name="Kitagawa M."/>
            <person name="Makino K."/>
            <person name="Miki T."/>
            <person name="Mizobuchi K."/>
            <person name="Mori H."/>
            <person name="Mori T."/>
            <person name="Motomura K."/>
            <person name="Nakade S."/>
            <person name="Nakamura Y."/>
            <person name="Nashimoto H."/>
            <person name="Nishio Y."/>
            <person name="Oshima T."/>
            <person name="Saito N."/>
            <person name="Sampei G."/>
            <person name="Seki Y."/>
            <person name="Sivasundaram S."/>
            <person name="Tagami H."/>
            <person name="Takeda J."/>
            <person name="Takemoto K."/>
            <person name="Takeuchi Y."/>
            <person name="Wada C."/>
            <person name="Yamamoto Y."/>
            <person name="Horiuchi T."/>
        </authorList>
    </citation>
    <scope>NUCLEOTIDE SEQUENCE [LARGE SCALE GENOMIC DNA]</scope>
    <source>
        <strain>K12 / W3110 / ATCC 27325 / DSM 5911</strain>
    </source>
</reference>
<reference key="2">
    <citation type="journal article" date="1997" name="Science">
        <title>The complete genome sequence of Escherichia coli K-12.</title>
        <authorList>
            <person name="Blattner F.R."/>
            <person name="Plunkett G. III"/>
            <person name="Bloch C.A."/>
            <person name="Perna N.T."/>
            <person name="Burland V."/>
            <person name="Riley M."/>
            <person name="Collado-Vides J."/>
            <person name="Glasner J.D."/>
            <person name="Rode C.K."/>
            <person name="Mayhew G.F."/>
            <person name="Gregor J."/>
            <person name="Davis N.W."/>
            <person name="Kirkpatrick H.A."/>
            <person name="Goeden M.A."/>
            <person name="Rose D.J."/>
            <person name="Mau B."/>
            <person name="Shao Y."/>
        </authorList>
    </citation>
    <scope>NUCLEOTIDE SEQUENCE [LARGE SCALE GENOMIC DNA]</scope>
    <source>
        <strain>K12 / MG1655 / ATCC 47076</strain>
    </source>
</reference>
<reference key="3">
    <citation type="journal article" date="2006" name="Mol. Syst. Biol.">
        <title>Highly accurate genome sequences of Escherichia coli K-12 strains MG1655 and W3110.</title>
        <authorList>
            <person name="Hayashi K."/>
            <person name="Morooka N."/>
            <person name="Yamamoto Y."/>
            <person name="Fujita K."/>
            <person name="Isono K."/>
            <person name="Choi S."/>
            <person name="Ohtsubo E."/>
            <person name="Baba T."/>
            <person name="Wanner B.L."/>
            <person name="Mori H."/>
            <person name="Horiuchi T."/>
        </authorList>
    </citation>
    <scope>NUCLEOTIDE SEQUENCE [LARGE SCALE GENOMIC DNA]</scope>
    <source>
        <strain>K12 / W3110 / ATCC 27325 / DSM 5911</strain>
    </source>
</reference>
<reference key="4">
    <citation type="journal article" date="1993" name="J. Bacteriol.">
        <title>Genetic and molecular analyses of the C-terminal region of the recE gene from the Rac prophage of Escherichia coli K-12 reveal the recT gene.</title>
        <authorList>
            <person name="Clark A.J."/>
            <person name="Sharma V."/>
            <person name="Brenowitz S."/>
            <person name="Chu C.C."/>
            <person name="Sandler S.J."/>
            <person name="Satin L."/>
            <person name="Templin A."/>
            <person name="Berger I."/>
            <person name="Cohen A."/>
        </authorList>
    </citation>
    <scope>NUCLEOTIDE SEQUENCE [GENOMIC DNA] OF 1-62</scope>
    <source>
        <strain>K12</strain>
    </source>
</reference>
<reference key="5">
    <citation type="journal article" date="2012" name="J. Bacteriol.">
        <title>The rcbA gene product reduces spontaneous and induced chromosome breaks in Escherichia coli.</title>
        <authorList>
            <person name="Felczak M.M."/>
            <person name="Kaguni J.M."/>
        </authorList>
    </citation>
    <scope>FUNCTION IN REDUCTION OF CHROMOSOME BREAKS</scope>
    <scope>DISRUPTION PHENOTYPE</scope>
    <scope>GENE NAME</scope>
</reference>
<reference key="6">
    <citation type="journal article" date="2014" name="Nucleic Acids Res.">
        <title>RalR (a DNase) and RalA (a small RNA) form a type I toxin-antitoxin system in Escherichia coli.</title>
        <authorList>
            <person name="Guo Y."/>
            <person name="Quiroga C."/>
            <person name="Chen Q."/>
            <person name="McAnulty M.J."/>
            <person name="Benedik M.J."/>
            <person name="Wood T.K."/>
            <person name="Wang X."/>
        </authorList>
    </citation>
    <scope>FUNCTION</scope>
    <scope>DISRUPTION PHENOTYPE</scope>
    <scope>ANTIBIOTIC RESISTANCE</scope>
    <scope>MUTAGENESIS OF MET-1 AND 9-GLU--ASN-69</scope>
    <source>
        <strain>K12 / BW25113</strain>
    </source>
</reference>
<evidence type="ECO:0000269" key="1">
    <source>
    </source>
</evidence>
<evidence type="ECO:0000269" key="2">
    <source>
    </source>
</evidence>
<evidence type="ECO:0000303" key="3">
    <source>
    </source>
</evidence>